<proteinExistence type="inferred from homology"/>
<reference key="1">
    <citation type="journal article" date="2004" name="Nature">
        <title>Genome evolution in yeasts.</title>
        <authorList>
            <person name="Dujon B."/>
            <person name="Sherman D."/>
            <person name="Fischer G."/>
            <person name="Durrens P."/>
            <person name="Casaregola S."/>
            <person name="Lafontaine I."/>
            <person name="de Montigny J."/>
            <person name="Marck C."/>
            <person name="Neuveglise C."/>
            <person name="Talla E."/>
            <person name="Goffard N."/>
            <person name="Frangeul L."/>
            <person name="Aigle M."/>
            <person name="Anthouard V."/>
            <person name="Babour A."/>
            <person name="Barbe V."/>
            <person name="Barnay S."/>
            <person name="Blanchin S."/>
            <person name="Beckerich J.-M."/>
            <person name="Beyne E."/>
            <person name="Bleykasten C."/>
            <person name="Boisrame A."/>
            <person name="Boyer J."/>
            <person name="Cattolico L."/>
            <person name="Confanioleri F."/>
            <person name="de Daruvar A."/>
            <person name="Despons L."/>
            <person name="Fabre E."/>
            <person name="Fairhead C."/>
            <person name="Ferry-Dumazet H."/>
            <person name="Groppi A."/>
            <person name="Hantraye F."/>
            <person name="Hennequin C."/>
            <person name="Jauniaux N."/>
            <person name="Joyet P."/>
            <person name="Kachouri R."/>
            <person name="Kerrest A."/>
            <person name="Koszul R."/>
            <person name="Lemaire M."/>
            <person name="Lesur I."/>
            <person name="Ma L."/>
            <person name="Muller H."/>
            <person name="Nicaud J.-M."/>
            <person name="Nikolski M."/>
            <person name="Oztas S."/>
            <person name="Ozier-Kalogeropoulos O."/>
            <person name="Pellenz S."/>
            <person name="Potier S."/>
            <person name="Richard G.-F."/>
            <person name="Straub M.-L."/>
            <person name="Suleau A."/>
            <person name="Swennen D."/>
            <person name="Tekaia F."/>
            <person name="Wesolowski-Louvel M."/>
            <person name="Westhof E."/>
            <person name="Wirth B."/>
            <person name="Zeniou-Meyer M."/>
            <person name="Zivanovic Y."/>
            <person name="Bolotin-Fukuhara M."/>
            <person name="Thierry A."/>
            <person name="Bouchier C."/>
            <person name="Caudron B."/>
            <person name="Scarpelli C."/>
            <person name="Gaillardin C."/>
            <person name="Weissenbach J."/>
            <person name="Wincker P."/>
            <person name="Souciet J.-L."/>
        </authorList>
    </citation>
    <scope>NUCLEOTIDE SEQUENCE [LARGE SCALE GENOMIC DNA]</scope>
    <source>
        <strain>CLIB 122 / E 150</strain>
    </source>
</reference>
<dbReference type="EC" id="1.1.1.102" evidence="4"/>
<dbReference type="EMBL" id="CR382128">
    <property type="protein sequence ID" value="CAG83279.1"/>
    <property type="molecule type" value="Genomic_DNA"/>
</dbReference>
<dbReference type="RefSeq" id="XP_501026.1">
    <property type="nucleotide sequence ID" value="XM_501026.1"/>
</dbReference>
<dbReference type="SMR" id="Q6CE86"/>
<dbReference type="FunCoup" id="Q6CE86">
    <property type="interactions" value="104"/>
</dbReference>
<dbReference type="STRING" id="284591.Q6CE86"/>
<dbReference type="EnsemblFungi" id="CAG83279">
    <property type="protein sequence ID" value="CAG83279"/>
    <property type="gene ID" value="YALI0_B17688g"/>
</dbReference>
<dbReference type="KEGG" id="yli:2907213"/>
<dbReference type="VEuPathDB" id="FungiDB:YALI0_B17688g"/>
<dbReference type="HOGENOM" id="CLU_010194_3_0_1"/>
<dbReference type="InParanoid" id="Q6CE86"/>
<dbReference type="OMA" id="PRQWGFF"/>
<dbReference type="OrthoDB" id="7704at4891"/>
<dbReference type="UniPathway" id="UPA00222"/>
<dbReference type="Proteomes" id="UP000001300">
    <property type="component" value="Chromosome B"/>
</dbReference>
<dbReference type="GO" id="GO:0005789">
    <property type="term" value="C:endoplasmic reticulum membrane"/>
    <property type="evidence" value="ECO:0000318"/>
    <property type="project" value="GO_Central"/>
</dbReference>
<dbReference type="GO" id="GO:0047560">
    <property type="term" value="F:3-dehydrosphinganine reductase activity"/>
    <property type="evidence" value="ECO:0000250"/>
    <property type="project" value="UniProtKB"/>
</dbReference>
<dbReference type="GO" id="GO:0070402">
    <property type="term" value="F:NADPH binding"/>
    <property type="evidence" value="ECO:0000250"/>
    <property type="project" value="UniProtKB"/>
</dbReference>
<dbReference type="GO" id="GO:0006666">
    <property type="term" value="P:3-keto-sphinganine metabolic process"/>
    <property type="evidence" value="ECO:0000250"/>
    <property type="project" value="UniProtKB"/>
</dbReference>
<dbReference type="GO" id="GO:0030148">
    <property type="term" value="P:sphingolipid biosynthetic process"/>
    <property type="evidence" value="ECO:0000250"/>
    <property type="project" value="UniProtKB"/>
</dbReference>
<dbReference type="CDD" id="cd08939">
    <property type="entry name" value="KDSR-like_SDR_c"/>
    <property type="match status" value="1"/>
</dbReference>
<dbReference type="Gene3D" id="3.40.50.720">
    <property type="entry name" value="NAD(P)-binding Rossmann-like Domain"/>
    <property type="match status" value="1"/>
</dbReference>
<dbReference type="InterPro" id="IPR045022">
    <property type="entry name" value="KDSR-like"/>
</dbReference>
<dbReference type="InterPro" id="IPR036291">
    <property type="entry name" value="NAD(P)-bd_dom_sf"/>
</dbReference>
<dbReference type="InterPro" id="IPR020904">
    <property type="entry name" value="Sc_DH/Rdtase_CS"/>
</dbReference>
<dbReference type="InterPro" id="IPR002347">
    <property type="entry name" value="SDR_fam"/>
</dbReference>
<dbReference type="PANTHER" id="PTHR43550">
    <property type="entry name" value="3-KETODIHYDROSPHINGOSINE REDUCTASE"/>
    <property type="match status" value="1"/>
</dbReference>
<dbReference type="PANTHER" id="PTHR43550:SF3">
    <property type="entry name" value="3-KETODIHYDROSPHINGOSINE REDUCTASE"/>
    <property type="match status" value="1"/>
</dbReference>
<dbReference type="Pfam" id="PF00106">
    <property type="entry name" value="adh_short"/>
    <property type="match status" value="1"/>
</dbReference>
<dbReference type="PRINTS" id="PR00081">
    <property type="entry name" value="GDHRDH"/>
</dbReference>
<dbReference type="SUPFAM" id="SSF51735">
    <property type="entry name" value="NAD(P)-binding Rossmann-fold domains"/>
    <property type="match status" value="1"/>
</dbReference>
<dbReference type="PROSITE" id="PS00061">
    <property type="entry name" value="ADH_SHORT"/>
    <property type="match status" value="1"/>
</dbReference>
<evidence type="ECO:0000250" key="1">
    <source>
        <dbReference type="UniProtKB" id="L0E2Z4"/>
    </source>
</evidence>
<evidence type="ECO:0000250" key="2">
    <source>
        <dbReference type="UniProtKB" id="O93868"/>
    </source>
</evidence>
<evidence type="ECO:0000250" key="3">
    <source>
        <dbReference type="UniProtKB" id="P0CR36"/>
    </source>
</evidence>
<evidence type="ECO:0000250" key="4">
    <source>
        <dbReference type="UniProtKB" id="P38342"/>
    </source>
</evidence>
<evidence type="ECO:0000250" key="5">
    <source>
        <dbReference type="UniProtKB" id="P40471"/>
    </source>
</evidence>
<evidence type="ECO:0000255" key="6"/>
<evidence type="ECO:0000305" key="7"/>
<accession>Q6CE86</accession>
<name>KDSR_YARLI</name>
<comment type="function">
    <text evidence="4">Catalyzes the reduction of 3'-oxosphinganine (3-ketodihydrosphingosine/KDS) to sphinganine (dihydrosphingosine/DHS), the second step of de novo sphingolipid biosynthesis.</text>
</comment>
<comment type="catalytic activity">
    <reaction evidence="4">
        <text>sphinganine + NADP(+) = 3-oxosphinganine + NADPH + H(+)</text>
        <dbReference type="Rhea" id="RHEA:22640"/>
        <dbReference type="ChEBI" id="CHEBI:15378"/>
        <dbReference type="ChEBI" id="CHEBI:57783"/>
        <dbReference type="ChEBI" id="CHEBI:57817"/>
        <dbReference type="ChEBI" id="CHEBI:58299"/>
        <dbReference type="ChEBI" id="CHEBI:58349"/>
        <dbReference type="EC" id="1.1.1.102"/>
    </reaction>
    <physiologicalReaction direction="right-to-left" evidence="4">
        <dbReference type="Rhea" id="RHEA:22642"/>
    </physiologicalReaction>
</comment>
<comment type="pathway">
    <text>Lipid metabolism; sphingolipid metabolism.</text>
</comment>
<comment type="subcellular location">
    <subcellularLocation>
        <location evidence="4">Endoplasmic reticulum membrane</location>
        <topology evidence="7">Single-pass membrane protein</topology>
    </subcellularLocation>
</comment>
<comment type="similarity">
    <text evidence="7">Belongs to the short-chain dehydrogenases/reductases (SDR) family.</text>
</comment>
<feature type="chain" id="PRO_0000054799" description="3-ketodihydrosphingosine reductase TSC10">
    <location>
        <begin position="1"/>
        <end position="372"/>
    </location>
</feature>
<feature type="transmembrane region" description="Helical" evidence="6">
    <location>
        <begin position="321"/>
        <end position="341"/>
    </location>
</feature>
<feature type="short sequence motif" description="GXSXG" evidence="5">
    <location>
        <begin position="67"/>
        <end position="71"/>
    </location>
</feature>
<feature type="active site" description="Proton donor" evidence="2">
    <location>
        <position position="205"/>
    </location>
</feature>
<feature type="active site" description="Proton acceptor" evidence="2">
    <location>
        <position position="219"/>
    </location>
</feature>
<feature type="active site" description="Lowers pKa of active site Tyr" evidence="2">
    <location>
        <position position="223"/>
    </location>
</feature>
<feature type="binding site" evidence="1">
    <location>
        <position position="64"/>
    </location>
    <ligand>
        <name>NADP(+)</name>
        <dbReference type="ChEBI" id="CHEBI:58349"/>
    </ligand>
</feature>
<feature type="binding site" evidence="3">
    <location>
        <position position="67"/>
    </location>
    <ligand>
        <name>NADPH</name>
        <dbReference type="ChEBI" id="CHEBI:57783"/>
    </ligand>
</feature>
<feature type="binding site" evidence="3">
    <location>
        <position position="69"/>
    </location>
    <ligand>
        <name>NADPH</name>
        <dbReference type="ChEBI" id="CHEBI:57783"/>
    </ligand>
</feature>
<feature type="binding site" evidence="3">
    <location>
        <position position="71"/>
    </location>
    <ligand>
        <name>NADPH</name>
        <dbReference type="ChEBI" id="CHEBI:57783"/>
    </ligand>
</feature>
<feature type="binding site" evidence="3">
    <location>
        <position position="92"/>
    </location>
    <ligand>
        <name>NADPH</name>
        <dbReference type="ChEBI" id="CHEBI:57783"/>
    </ligand>
</feature>
<feature type="binding site" evidence="3">
    <location>
        <position position="96"/>
    </location>
    <ligand>
        <name>NADPH</name>
        <dbReference type="ChEBI" id="CHEBI:57783"/>
    </ligand>
</feature>
<feature type="binding site" evidence="1">
    <location>
        <position position="123"/>
    </location>
    <ligand>
        <name>NADP(+)</name>
        <dbReference type="ChEBI" id="CHEBI:58349"/>
    </ligand>
</feature>
<feature type="binding site" evidence="3">
    <location>
        <position position="123"/>
    </location>
    <ligand>
        <name>NADPH</name>
        <dbReference type="ChEBI" id="CHEBI:57783"/>
    </ligand>
</feature>
<feature type="binding site" evidence="3">
    <location>
        <position position="124"/>
    </location>
    <ligand>
        <name>NADPH</name>
        <dbReference type="ChEBI" id="CHEBI:57783"/>
    </ligand>
</feature>
<feature type="binding site" evidence="2">
    <location>
        <position position="219"/>
    </location>
    <ligand>
        <name>NADP(+)</name>
        <dbReference type="ChEBI" id="CHEBI:58349"/>
    </ligand>
</feature>
<feature type="binding site" evidence="2">
    <location>
        <position position="223"/>
    </location>
    <ligand>
        <name>NADP(+)</name>
        <dbReference type="ChEBI" id="CHEBI:58349"/>
    </ligand>
</feature>
<feature type="binding site" evidence="1">
    <location>
        <position position="254"/>
    </location>
    <ligand>
        <name>NADP(+)</name>
        <dbReference type="ChEBI" id="CHEBI:58349"/>
    </ligand>
</feature>
<gene>
    <name type="primary">TSC10</name>
    <name type="ordered locus">YALI0B17688g</name>
</gene>
<sequence length="372" mass="40734">MIFPISEIPDKVTHSILEGVSALQNMSHTAFWSTVLGFLVVARIAVILATPKRRVLDIKGKKVVISGGSQGAGAALAELCYTKGANVVIVSRTVSKLEAQVQKIVTKHEPVFEGQTIRYISADLTKEEEAIRVFSEETMPAPPDVIFSCAGAAETGFILDFKASQLARAFSTNYLSALFFVHAGTTRMAKEPISPKNPRYVAIFSSVLAFYPLLGYGQYCASKAAVRSLIDSLRVEALPFNIRVVGVFPGNFQSEGFEEENKSKPEITRQIEGPSQAISAEECAKIVFAQMEKGGQMITTDLIGWILQSIALSSSPRSFSLLQIPLAIFMCIFSPVWNAFVNRDVRKYFHANTEYVTRHQRGGVGSENPTPQ</sequence>
<protein>
    <recommendedName>
        <fullName>3-ketodihydrosphingosine reductase TSC10</fullName>
        <ecNumber evidence="4">1.1.1.102</ecNumber>
    </recommendedName>
    <alternativeName>
        <fullName>3-dehydrosphinganine reductase</fullName>
    </alternativeName>
    <alternativeName>
        <fullName>KDS reductase</fullName>
    </alternativeName>
</protein>
<organism>
    <name type="scientific">Yarrowia lipolytica (strain CLIB 122 / E 150)</name>
    <name type="common">Yeast</name>
    <name type="synonym">Candida lipolytica</name>
    <dbReference type="NCBI Taxonomy" id="284591"/>
    <lineage>
        <taxon>Eukaryota</taxon>
        <taxon>Fungi</taxon>
        <taxon>Dikarya</taxon>
        <taxon>Ascomycota</taxon>
        <taxon>Saccharomycotina</taxon>
        <taxon>Dipodascomycetes</taxon>
        <taxon>Dipodascales</taxon>
        <taxon>Dipodascales incertae sedis</taxon>
        <taxon>Yarrowia</taxon>
    </lineage>
</organism>
<keyword id="KW-0256">Endoplasmic reticulum</keyword>
<keyword id="KW-0443">Lipid metabolism</keyword>
<keyword id="KW-0472">Membrane</keyword>
<keyword id="KW-0521">NADP</keyword>
<keyword id="KW-0547">Nucleotide-binding</keyword>
<keyword id="KW-0560">Oxidoreductase</keyword>
<keyword id="KW-1185">Reference proteome</keyword>
<keyword id="KW-0746">Sphingolipid metabolism</keyword>
<keyword id="KW-0812">Transmembrane</keyword>
<keyword id="KW-1133">Transmembrane helix</keyword>